<accession>P94328</accession>
<name>MOAC_BRADU</name>
<reference key="1">
    <citation type="journal article" date="1997" name="Biochim. Biophys. Acta">
        <title>The sequence of a symbiotically essential Bradyrhizobium japonicum operon consisting of trpD, trpC and a moaC-like gene.</title>
        <authorList>
            <person name="Kuykendall L.D."/>
            <person name="Hunter W.J."/>
        </authorList>
    </citation>
    <scope>NUCLEOTIDE SEQUENCE [GENOMIC DNA]</scope>
    <source>
        <strain>JCM 10833 / BCRC 13528 / IAM 13628 / NBRC 14792 / USDA 110</strain>
    </source>
</reference>
<reference key="2">
    <citation type="journal article" date="2002" name="DNA Res.">
        <title>Complete genomic sequence of nitrogen-fixing symbiotic bacterium Bradyrhizobium japonicum USDA110.</title>
        <authorList>
            <person name="Kaneko T."/>
            <person name="Nakamura Y."/>
            <person name="Sato S."/>
            <person name="Minamisawa K."/>
            <person name="Uchiumi T."/>
            <person name="Sasamoto S."/>
            <person name="Watanabe A."/>
            <person name="Idesawa K."/>
            <person name="Iriguchi M."/>
            <person name="Kawashima K."/>
            <person name="Kohara M."/>
            <person name="Matsumoto M."/>
            <person name="Shimpo S."/>
            <person name="Tsuruoka H."/>
            <person name="Wada T."/>
            <person name="Yamada M."/>
            <person name="Tabata S."/>
        </authorList>
    </citation>
    <scope>NUCLEOTIDE SEQUENCE [LARGE SCALE GENOMIC DNA]</scope>
    <source>
        <strain>JCM 10833 / BCRC 13528 / IAM 13628 / NBRC 14792 / USDA 110</strain>
    </source>
</reference>
<sequence length="172" mass="18032">MARKPSKTRPSKAKSGPALTHIGATGEARMVDVSDKPATERLAVAEGRVLMTRATLDLIVSGNAKKGDVLGTARIAGIMAAKRTSELIPLCHPLALSKVTVDIEPDAKLPGCLVRASVKVTGPTGVEMEALTAVSVACLTIYDMIKAVERGVRIEGIHLVEKLGGKSGHYRA</sequence>
<gene>
    <name type="primary">moaC</name>
    <name type="ordered locus">blr4811</name>
</gene>
<keyword id="KW-0456">Lyase</keyword>
<keyword id="KW-0501">Molybdenum cofactor biosynthesis</keyword>
<keyword id="KW-1185">Reference proteome</keyword>
<comment type="function">
    <text evidence="1">Catalyzes the conversion of (8S)-3',8-cyclo-7,8-dihydroguanosine 5'-triphosphate to cyclic pyranopterin monophosphate (cPMP).</text>
</comment>
<comment type="catalytic activity">
    <reaction evidence="1">
        <text>(8S)-3',8-cyclo-7,8-dihydroguanosine 5'-triphosphate = cyclic pyranopterin phosphate + diphosphate</text>
        <dbReference type="Rhea" id="RHEA:49580"/>
        <dbReference type="ChEBI" id="CHEBI:33019"/>
        <dbReference type="ChEBI" id="CHEBI:59648"/>
        <dbReference type="ChEBI" id="CHEBI:131766"/>
        <dbReference type="EC" id="4.6.1.17"/>
    </reaction>
</comment>
<comment type="pathway">
    <text evidence="1">Cofactor biosynthesis; molybdopterin biosynthesis.</text>
</comment>
<comment type="subunit">
    <text evidence="1">Homohexamer; trimer of dimers.</text>
</comment>
<comment type="similarity">
    <text evidence="1">Belongs to the MoaC family.</text>
</comment>
<proteinExistence type="inferred from homology"/>
<dbReference type="EC" id="4.6.1.17" evidence="1"/>
<dbReference type="EMBL" id="U79771">
    <property type="protein sequence ID" value="AAB39008.1"/>
    <property type="molecule type" value="Genomic_DNA"/>
</dbReference>
<dbReference type="EMBL" id="BA000040">
    <property type="protein sequence ID" value="BAC50076.1"/>
    <property type="molecule type" value="Genomic_DNA"/>
</dbReference>
<dbReference type="PIR" id="T46960">
    <property type="entry name" value="T46960"/>
</dbReference>
<dbReference type="RefSeq" id="NP_771451.1">
    <property type="nucleotide sequence ID" value="NC_004463.1"/>
</dbReference>
<dbReference type="RefSeq" id="WP_011087579.1">
    <property type="nucleotide sequence ID" value="NC_004463.1"/>
</dbReference>
<dbReference type="SMR" id="P94328"/>
<dbReference type="FunCoup" id="P94328">
    <property type="interactions" value="446"/>
</dbReference>
<dbReference type="STRING" id="224911.AAV28_21350"/>
<dbReference type="EnsemblBacteria" id="BAC50076">
    <property type="protein sequence ID" value="BAC50076"/>
    <property type="gene ID" value="BAC50076"/>
</dbReference>
<dbReference type="GeneID" id="46491816"/>
<dbReference type="KEGG" id="bja:blr4811"/>
<dbReference type="PATRIC" id="fig|224911.44.peg.4650"/>
<dbReference type="eggNOG" id="COG0315">
    <property type="taxonomic scope" value="Bacteria"/>
</dbReference>
<dbReference type="HOGENOM" id="CLU_074693_1_1_5"/>
<dbReference type="InParanoid" id="P94328"/>
<dbReference type="OrthoDB" id="9794429at2"/>
<dbReference type="PhylomeDB" id="P94328"/>
<dbReference type="UniPathway" id="UPA00344"/>
<dbReference type="Proteomes" id="UP000002526">
    <property type="component" value="Chromosome"/>
</dbReference>
<dbReference type="GO" id="GO:0061799">
    <property type="term" value="F:cyclic pyranopterin monophosphate synthase activity"/>
    <property type="evidence" value="ECO:0007669"/>
    <property type="project" value="UniProtKB-UniRule"/>
</dbReference>
<dbReference type="GO" id="GO:0006777">
    <property type="term" value="P:Mo-molybdopterin cofactor biosynthetic process"/>
    <property type="evidence" value="ECO:0007669"/>
    <property type="project" value="UniProtKB-UniRule"/>
</dbReference>
<dbReference type="CDD" id="cd01420">
    <property type="entry name" value="MoaC_PE"/>
    <property type="match status" value="1"/>
</dbReference>
<dbReference type="Gene3D" id="3.30.70.640">
    <property type="entry name" value="Molybdopterin cofactor biosynthesis C (MoaC) domain"/>
    <property type="match status" value="1"/>
</dbReference>
<dbReference type="HAMAP" id="MF_01224_B">
    <property type="entry name" value="MoaC_B"/>
    <property type="match status" value="1"/>
</dbReference>
<dbReference type="InterPro" id="IPR023045">
    <property type="entry name" value="MoaC"/>
</dbReference>
<dbReference type="InterPro" id="IPR047594">
    <property type="entry name" value="MoaC_bact/euk"/>
</dbReference>
<dbReference type="InterPro" id="IPR036522">
    <property type="entry name" value="MoaC_sf"/>
</dbReference>
<dbReference type="InterPro" id="IPR050105">
    <property type="entry name" value="MoCo_biosynth_MoaA/MoaC"/>
</dbReference>
<dbReference type="InterPro" id="IPR002820">
    <property type="entry name" value="Mopterin_CF_biosynth-C_dom"/>
</dbReference>
<dbReference type="NCBIfam" id="TIGR00581">
    <property type="entry name" value="moaC"/>
    <property type="match status" value="1"/>
</dbReference>
<dbReference type="NCBIfam" id="NF006870">
    <property type="entry name" value="PRK09364.1"/>
    <property type="match status" value="1"/>
</dbReference>
<dbReference type="PANTHER" id="PTHR22960:SF29">
    <property type="entry name" value="CYCLIC PYRANOPTERIN MONOPHOSPHATE SYNTHASE"/>
    <property type="match status" value="1"/>
</dbReference>
<dbReference type="PANTHER" id="PTHR22960">
    <property type="entry name" value="MOLYBDOPTERIN COFACTOR SYNTHESIS PROTEIN A"/>
    <property type="match status" value="1"/>
</dbReference>
<dbReference type="Pfam" id="PF01967">
    <property type="entry name" value="MoaC"/>
    <property type="match status" value="1"/>
</dbReference>
<dbReference type="SUPFAM" id="SSF55040">
    <property type="entry name" value="Molybdenum cofactor biosynthesis protein C, MoaC"/>
    <property type="match status" value="1"/>
</dbReference>
<organism>
    <name type="scientific">Bradyrhizobium diazoefficiens (strain JCM 10833 / BCRC 13528 / IAM 13628 / NBRC 14792 / USDA 110)</name>
    <dbReference type="NCBI Taxonomy" id="224911"/>
    <lineage>
        <taxon>Bacteria</taxon>
        <taxon>Pseudomonadati</taxon>
        <taxon>Pseudomonadota</taxon>
        <taxon>Alphaproteobacteria</taxon>
        <taxon>Hyphomicrobiales</taxon>
        <taxon>Nitrobacteraceae</taxon>
        <taxon>Bradyrhizobium</taxon>
    </lineage>
</organism>
<feature type="chain" id="PRO_0000097788" description="Cyclic pyranopterin monophosphate synthase">
    <location>
        <begin position="1"/>
        <end position="172"/>
    </location>
</feature>
<feature type="region of interest" description="Disordered" evidence="2">
    <location>
        <begin position="1"/>
        <end position="20"/>
    </location>
</feature>
<feature type="compositionally biased region" description="Basic residues" evidence="2">
    <location>
        <begin position="1"/>
        <end position="12"/>
    </location>
</feature>
<feature type="active site" evidence="1">
    <location>
        <position position="143"/>
    </location>
</feature>
<feature type="binding site" evidence="1">
    <location>
        <begin position="90"/>
        <end position="92"/>
    </location>
    <ligand>
        <name>substrate</name>
    </ligand>
</feature>
<feature type="binding site" evidence="1">
    <location>
        <begin position="128"/>
        <end position="129"/>
    </location>
    <ligand>
        <name>substrate</name>
    </ligand>
</feature>
<feature type="sequence conflict" description="In Ref. 1; AAB39008." evidence="3" ref="1">
    <original>P</original>
    <variation>T</variation>
    <location>
        <position position="105"/>
    </location>
</feature>
<evidence type="ECO:0000255" key="1">
    <source>
        <dbReference type="HAMAP-Rule" id="MF_01224"/>
    </source>
</evidence>
<evidence type="ECO:0000256" key="2">
    <source>
        <dbReference type="SAM" id="MobiDB-lite"/>
    </source>
</evidence>
<evidence type="ECO:0000305" key="3"/>
<protein>
    <recommendedName>
        <fullName evidence="1">Cyclic pyranopterin monophosphate synthase</fullName>
        <ecNumber evidence="1">4.6.1.17</ecNumber>
    </recommendedName>
    <alternativeName>
        <fullName evidence="1">Molybdenum cofactor biosynthesis protein C</fullName>
    </alternativeName>
</protein>